<keyword id="KW-0067">ATP-binding</keyword>
<keyword id="KW-0963">Cytoplasm</keyword>
<keyword id="KW-0227">DNA damage</keyword>
<keyword id="KW-0233">DNA recombination</keyword>
<keyword id="KW-0234">DNA repair</keyword>
<keyword id="KW-0238">DNA-binding</keyword>
<keyword id="KW-0547">Nucleotide-binding</keyword>
<keyword id="KW-0742">SOS response</keyword>
<comment type="function">
    <text evidence="1">Can catalyze the hydrolysis of ATP in the presence of single-stranded DNA, the ATP-dependent uptake of single-stranded DNA by duplex DNA, and the ATP-dependent hybridization of homologous single-stranded DNAs. It interacts with LexA causing its activation and leading to its autocatalytic cleavage.</text>
</comment>
<comment type="subcellular location">
    <subcellularLocation>
        <location evidence="1">Cytoplasm</location>
    </subcellularLocation>
</comment>
<comment type="similarity">
    <text evidence="1">Belongs to the RecA family.</text>
</comment>
<comment type="sequence caution" evidence="2">
    <conflict type="erroneous initiation">
        <sequence resource="EMBL-CDS" id="AEH34121"/>
    </conflict>
    <text>Extended N-terminus.</text>
</comment>
<protein>
    <recommendedName>
        <fullName evidence="1">Protein RecA</fullName>
    </recommendedName>
    <alternativeName>
        <fullName evidence="1">Recombinase A</fullName>
    </alternativeName>
</protein>
<gene>
    <name evidence="1" type="primary">recA</name>
    <name type="ordered locus">VAA_00704</name>
</gene>
<organism>
    <name type="scientific">Vibrio anguillarum (strain ATCC 68554 / 775)</name>
    <name type="common">Listonella anguillarum</name>
    <dbReference type="NCBI Taxonomy" id="882102"/>
    <lineage>
        <taxon>Bacteria</taxon>
        <taxon>Pseudomonadati</taxon>
        <taxon>Pseudomonadota</taxon>
        <taxon>Gammaproteobacteria</taxon>
        <taxon>Vibrionales</taxon>
        <taxon>Vibrionaceae</taxon>
        <taxon>Vibrio</taxon>
    </lineage>
</organism>
<evidence type="ECO:0000255" key="1">
    <source>
        <dbReference type="HAMAP-Rule" id="MF_00268"/>
    </source>
</evidence>
<evidence type="ECO:0000305" key="2"/>
<dbReference type="EMBL" id="CP002284">
    <property type="protein sequence ID" value="AEH34121.1"/>
    <property type="status" value="ALT_INIT"/>
    <property type="molecule type" value="Genomic_DNA"/>
</dbReference>
<dbReference type="PIR" id="JQ1461">
    <property type="entry name" value="JQ1461"/>
</dbReference>
<dbReference type="RefSeq" id="WP_010320444.1">
    <property type="nucleotide sequence ID" value="NC_015633.1"/>
</dbReference>
<dbReference type="SMR" id="F7YQ08"/>
<dbReference type="GeneID" id="83861032"/>
<dbReference type="KEGG" id="van:VAA_00704"/>
<dbReference type="eggNOG" id="COG0468">
    <property type="taxonomic scope" value="Bacteria"/>
</dbReference>
<dbReference type="HOGENOM" id="CLU_040469_3_2_6"/>
<dbReference type="GO" id="GO:0005829">
    <property type="term" value="C:cytosol"/>
    <property type="evidence" value="ECO:0007669"/>
    <property type="project" value="TreeGrafter"/>
</dbReference>
<dbReference type="GO" id="GO:0005524">
    <property type="term" value="F:ATP binding"/>
    <property type="evidence" value="ECO:0007669"/>
    <property type="project" value="UniProtKB-UniRule"/>
</dbReference>
<dbReference type="GO" id="GO:0016887">
    <property type="term" value="F:ATP hydrolysis activity"/>
    <property type="evidence" value="ECO:0007669"/>
    <property type="project" value="InterPro"/>
</dbReference>
<dbReference type="GO" id="GO:0140664">
    <property type="term" value="F:ATP-dependent DNA damage sensor activity"/>
    <property type="evidence" value="ECO:0007669"/>
    <property type="project" value="InterPro"/>
</dbReference>
<dbReference type="GO" id="GO:0003684">
    <property type="term" value="F:damaged DNA binding"/>
    <property type="evidence" value="ECO:0007669"/>
    <property type="project" value="UniProtKB-UniRule"/>
</dbReference>
<dbReference type="GO" id="GO:0003697">
    <property type="term" value="F:single-stranded DNA binding"/>
    <property type="evidence" value="ECO:0007669"/>
    <property type="project" value="UniProtKB-UniRule"/>
</dbReference>
<dbReference type="GO" id="GO:0006310">
    <property type="term" value="P:DNA recombination"/>
    <property type="evidence" value="ECO:0007669"/>
    <property type="project" value="UniProtKB-UniRule"/>
</dbReference>
<dbReference type="GO" id="GO:0006281">
    <property type="term" value="P:DNA repair"/>
    <property type="evidence" value="ECO:0007669"/>
    <property type="project" value="UniProtKB-UniRule"/>
</dbReference>
<dbReference type="GO" id="GO:0009432">
    <property type="term" value="P:SOS response"/>
    <property type="evidence" value="ECO:0007669"/>
    <property type="project" value="UniProtKB-UniRule"/>
</dbReference>
<dbReference type="CDD" id="cd00983">
    <property type="entry name" value="RecA"/>
    <property type="match status" value="1"/>
</dbReference>
<dbReference type="FunFam" id="3.40.50.300:FF:000087">
    <property type="entry name" value="Recombinase RecA"/>
    <property type="match status" value="1"/>
</dbReference>
<dbReference type="Gene3D" id="3.40.50.300">
    <property type="entry name" value="P-loop containing nucleotide triphosphate hydrolases"/>
    <property type="match status" value="1"/>
</dbReference>
<dbReference type="HAMAP" id="MF_00268">
    <property type="entry name" value="RecA"/>
    <property type="match status" value="1"/>
</dbReference>
<dbReference type="InterPro" id="IPR003593">
    <property type="entry name" value="AAA+_ATPase"/>
</dbReference>
<dbReference type="InterPro" id="IPR013765">
    <property type="entry name" value="DNA_recomb/repair_RecA"/>
</dbReference>
<dbReference type="InterPro" id="IPR020584">
    <property type="entry name" value="DNA_recomb/repair_RecA_CS"/>
</dbReference>
<dbReference type="InterPro" id="IPR027417">
    <property type="entry name" value="P-loop_NTPase"/>
</dbReference>
<dbReference type="InterPro" id="IPR049261">
    <property type="entry name" value="RecA-like_C"/>
</dbReference>
<dbReference type="InterPro" id="IPR049428">
    <property type="entry name" value="RecA-like_N"/>
</dbReference>
<dbReference type="InterPro" id="IPR020588">
    <property type="entry name" value="RecA_ATP-bd"/>
</dbReference>
<dbReference type="InterPro" id="IPR023400">
    <property type="entry name" value="RecA_C_sf"/>
</dbReference>
<dbReference type="InterPro" id="IPR020587">
    <property type="entry name" value="RecA_monomer-monomer_interface"/>
</dbReference>
<dbReference type="NCBIfam" id="TIGR02012">
    <property type="entry name" value="tigrfam_recA"/>
    <property type="match status" value="1"/>
</dbReference>
<dbReference type="PANTHER" id="PTHR45900:SF1">
    <property type="entry name" value="MITOCHONDRIAL DNA REPAIR PROTEIN RECA HOMOLOG-RELATED"/>
    <property type="match status" value="1"/>
</dbReference>
<dbReference type="PANTHER" id="PTHR45900">
    <property type="entry name" value="RECA"/>
    <property type="match status" value="1"/>
</dbReference>
<dbReference type="Pfam" id="PF00154">
    <property type="entry name" value="RecA"/>
    <property type="match status" value="1"/>
</dbReference>
<dbReference type="Pfam" id="PF21096">
    <property type="entry name" value="RecA_C"/>
    <property type="match status" value="1"/>
</dbReference>
<dbReference type="PRINTS" id="PR00142">
    <property type="entry name" value="RECA"/>
</dbReference>
<dbReference type="SMART" id="SM00382">
    <property type="entry name" value="AAA"/>
    <property type="match status" value="1"/>
</dbReference>
<dbReference type="SUPFAM" id="SSF52540">
    <property type="entry name" value="P-loop containing nucleoside triphosphate hydrolases"/>
    <property type="match status" value="1"/>
</dbReference>
<dbReference type="SUPFAM" id="SSF54752">
    <property type="entry name" value="RecA protein, C-terminal domain"/>
    <property type="match status" value="1"/>
</dbReference>
<dbReference type="PROSITE" id="PS00321">
    <property type="entry name" value="RECA_1"/>
    <property type="match status" value="1"/>
</dbReference>
<dbReference type="PROSITE" id="PS50162">
    <property type="entry name" value="RECA_2"/>
    <property type="match status" value="1"/>
</dbReference>
<dbReference type="PROSITE" id="PS50163">
    <property type="entry name" value="RECA_3"/>
    <property type="match status" value="1"/>
</dbReference>
<name>RECA_VIBA7</name>
<sequence length="348" mass="37586">MDENKQKALAAALGQIEKQFGKGSIMRLGDNRTMDVETISTGSLSLDIALGAGGLPMGRIVEVYGPESSGKTTLTLELIAAAQRVGKTCAFIDAEHALDPIYAKKLGVNIDELLVSQPDTGEQALEICDALARSGAIDVIVIDSVAALTPKAEIEGEMGDSHMGLQARMLSQAMRKLTGNLKQSNCMCIFINQIRMKIGVMFGNPETTTGGNALKFYASVRLDIRRTGSIKEGDEVVGNETRIKVVKNKIAAPFKQADTQILYGQGFNREGELVDLGVKHKLVEKAGAWYSYNGDKIGQGKANACKFLRENPAAAMALDTKLREMLLNPAELIVEEPILSEMPQEEEL</sequence>
<reference key="1">
    <citation type="journal article" date="1992" name="Gene">
        <title>Characterization of the recA gene of Vibrio anguillarum.</title>
        <authorList>
            <person name="Tolmasky M.E."/>
            <person name="Gammie A.E."/>
            <person name="Crosa J.H."/>
        </authorList>
    </citation>
    <scope>NUCLEOTIDE SEQUENCE [GENOMIC DNA]</scope>
    <source>
        <strain>ATCC 68554 / 775</strain>
    </source>
</reference>
<reference key="2">
    <citation type="journal article" date="2011" name="Infect. Immun.">
        <title>Complete genome sequence of the marine fish pathogen Vibrio anguillarum harboring the pJM1 virulence plasmid and genomic comparison with other virulent strains of V. anguillarum and V. ordalii.</title>
        <authorList>
            <person name="Naka H."/>
            <person name="Dias G.M."/>
            <person name="Thompson C.C."/>
            <person name="Dubay C."/>
            <person name="Thompson F.L."/>
            <person name="Crosa J.H."/>
        </authorList>
    </citation>
    <scope>NUCLEOTIDE SEQUENCE [LARGE SCALE GENOMIC DNA]</scope>
    <source>
        <strain>ATCC 68554 / 775</strain>
    </source>
</reference>
<proteinExistence type="inferred from homology"/>
<accession>F7YQ08</accession>
<feature type="chain" id="PRO_0000417117" description="Protein RecA">
    <location>
        <begin position="1"/>
        <end position="348"/>
    </location>
</feature>
<feature type="binding site" evidence="1">
    <location>
        <begin position="65"/>
        <end position="72"/>
    </location>
    <ligand>
        <name>ATP</name>
        <dbReference type="ChEBI" id="CHEBI:30616"/>
    </ligand>
</feature>
<feature type="sequence conflict" description="In Ref. 1; no nucleotide entry." evidence="2" ref="1">
    <original>V</original>
    <variation>A</variation>
    <location>
        <position position="236"/>
    </location>
</feature>